<keyword id="KW-0028">Amino-acid biosynthesis</keyword>
<keyword id="KW-0057">Aromatic amino acid biosynthesis</keyword>
<keyword id="KW-0210">Decarboxylase</keyword>
<keyword id="KW-0413">Isomerase</keyword>
<keyword id="KW-0456">Lyase</keyword>
<keyword id="KW-0511">Multifunctional enzyme</keyword>
<keyword id="KW-1185">Reference proteome</keyword>
<keyword id="KW-0822">Tryptophan biosynthesis</keyword>
<comment type="function">
    <text evidence="1">Bifunctional enzyme that catalyzes two sequential steps of tryptophan biosynthetic pathway. The first reaction is catalyzed by the isomerase, coded by the TrpF domain; the second reaction is catalyzed by the synthase, coded by the TrpC domain (By similarity).</text>
</comment>
<comment type="catalytic activity">
    <reaction>
        <text>N-(5-phospho-beta-D-ribosyl)anthranilate = 1-(2-carboxyphenylamino)-1-deoxy-D-ribulose 5-phosphate</text>
        <dbReference type="Rhea" id="RHEA:21540"/>
        <dbReference type="ChEBI" id="CHEBI:18277"/>
        <dbReference type="ChEBI" id="CHEBI:58613"/>
        <dbReference type="EC" id="5.3.1.24"/>
    </reaction>
</comment>
<comment type="catalytic activity">
    <reaction>
        <text>1-(2-carboxyphenylamino)-1-deoxy-D-ribulose 5-phosphate + H(+) = (1S,2R)-1-C-(indol-3-yl)glycerol 3-phosphate + CO2 + H2O</text>
        <dbReference type="Rhea" id="RHEA:23476"/>
        <dbReference type="ChEBI" id="CHEBI:15377"/>
        <dbReference type="ChEBI" id="CHEBI:15378"/>
        <dbReference type="ChEBI" id="CHEBI:16526"/>
        <dbReference type="ChEBI" id="CHEBI:58613"/>
        <dbReference type="ChEBI" id="CHEBI:58866"/>
        <dbReference type="EC" id="4.1.1.48"/>
    </reaction>
</comment>
<comment type="pathway">
    <text>Amino-acid biosynthesis; L-tryptophan biosynthesis; L-tryptophan from chorismate: step 3/5.</text>
</comment>
<comment type="pathway">
    <text>Amino-acid biosynthesis; L-tryptophan biosynthesis; L-tryptophan from chorismate: step 4/5.</text>
</comment>
<comment type="subunit">
    <text>Monomer.</text>
</comment>
<comment type="similarity">
    <text evidence="2">In the N-terminal section; belongs to the TrpC family.</text>
</comment>
<comment type="similarity">
    <text evidence="2">In the C-terminal section; belongs to the TrpF family.</text>
</comment>
<name>TRPC_SALTY</name>
<gene>
    <name type="primary">trpC</name>
    <name type="ordered locus">STM1725</name>
</gene>
<dbReference type="EC" id="4.1.1.48"/>
<dbReference type="EC" id="5.3.1.24"/>
<dbReference type="EMBL" id="AH000942">
    <property type="protein sequence ID" value="AAA27237.1"/>
    <property type="molecule type" value="Genomic_DNA"/>
</dbReference>
<dbReference type="EMBL" id="AE006468">
    <property type="protein sequence ID" value="AAL20643.1"/>
    <property type="molecule type" value="Genomic_DNA"/>
</dbReference>
<dbReference type="PIR" id="A01132">
    <property type="entry name" value="GWEBT"/>
</dbReference>
<dbReference type="RefSeq" id="NP_460684.1">
    <property type="nucleotide sequence ID" value="NC_003197.2"/>
</dbReference>
<dbReference type="SMR" id="P00910"/>
<dbReference type="STRING" id="99287.STM1725"/>
<dbReference type="PaxDb" id="99287-STM1725"/>
<dbReference type="GeneID" id="1253244"/>
<dbReference type="KEGG" id="stm:STM1725"/>
<dbReference type="PATRIC" id="fig|99287.12.peg.1821"/>
<dbReference type="HOGENOM" id="CLU_007713_0_0_6"/>
<dbReference type="OMA" id="NVKTPFM"/>
<dbReference type="PhylomeDB" id="P00910"/>
<dbReference type="BioCyc" id="SENT99287:STM1725-MONOMER"/>
<dbReference type="UniPathway" id="UPA00035">
    <property type="reaction ID" value="UER00042"/>
</dbReference>
<dbReference type="UniPathway" id="UPA00035">
    <property type="reaction ID" value="UER00043"/>
</dbReference>
<dbReference type="Proteomes" id="UP000001014">
    <property type="component" value="Chromosome"/>
</dbReference>
<dbReference type="GO" id="GO:0004425">
    <property type="term" value="F:indole-3-glycerol-phosphate synthase activity"/>
    <property type="evidence" value="ECO:0000318"/>
    <property type="project" value="GO_Central"/>
</dbReference>
<dbReference type="GO" id="GO:0004640">
    <property type="term" value="F:phosphoribosylanthranilate isomerase activity"/>
    <property type="evidence" value="ECO:0000318"/>
    <property type="project" value="GO_Central"/>
</dbReference>
<dbReference type="GO" id="GO:0000162">
    <property type="term" value="P:L-tryptophan biosynthetic process"/>
    <property type="evidence" value="ECO:0000318"/>
    <property type="project" value="GO_Central"/>
</dbReference>
<dbReference type="CDD" id="cd00331">
    <property type="entry name" value="IGPS"/>
    <property type="match status" value="1"/>
</dbReference>
<dbReference type="CDD" id="cd00405">
    <property type="entry name" value="PRAI"/>
    <property type="match status" value="1"/>
</dbReference>
<dbReference type="FunFam" id="3.20.20.70:FF:000024">
    <property type="entry name" value="Indole-3-glycerol phosphate synthase"/>
    <property type="match status" value="1"/>
</dbReference>
<dbReference type="FunFam" id="3.20.20.70:FF:000165">
    <property type="entry name" value="Multifunctional fusion protein"/>
    <property type="match status" value="1"/>
</dbReference>
<dbReference type="Gene3D" id="3.20.20.70">
    <property type="entry name" value="Aldolase class I"/>
    <property type="match status" value="2"/>
</dbReference>
<dbReference type="HAMAP" id="MF_00134_B">
    <property type="entry name" value="IGPS_B"/>
    <property type="match status" value="1"/>
</dbReference>
<dbReference type="HAMAP" id="MF_00135">
    <property type="entry name" value="PRAI"/>
    <property type="match status" value="1"/>
</dbReference>
<dbReference type="InterPro" id="IPR013785">
    <property type="entry name" value="Aldolase_TIM"/>
</dbReference>
<dbReference type="InterPro" id="IPR045186">
    <property type="entry name" value="Indole-3-glycerol_P_synth"/>
</dbReference>
<dbReference type="InterPro" id="IPR013798">
    <property type="entry name" value="Indole-3-glycerol_P_synth_dom"/>
</dbReference>
<dbReference type="InterPro" id="IPR001468">
    <property type="entry name" value="Indole-3-GlycerolPSynthase_CS"/>
</dbReference>
<dbReference type="InterPro" id="IPR001240">
    <property type="entry name" value="PRAI_dom"/>
</dbReference>
<dbReference type="InterPro" id="IPR011060">
    <property type="entry name" value="RibuloseP-bd_barrel"/>
</dbReference>
<dbReference type="NCBIfam" id="NF001377">
    <property type="entry name" value="PRK00278.2-4"/>
    <property type="match status" value="1"/>
</dbReference>
<dbReference type="NCBIfam" id="NF006945">
    <property type="entry name" value="PRK09427.1"/>
    <property type="match status" value="1"/>
</dbReference>
<dbReference type="PANTHER" id="PTHR22854:SF2">
    <property type="entry name" value="INDOLE-3-GLYCEROL-PHOSPHATE SYNTHASE"/>
    <property type="match status" value="1"/>
</dbReference>
<dbReference type="PANTHER" id="PTHR22854">
    <property type="entry name" value="TRYPTOPHAN BIOSYNTHESIS PROTEIN"/>
    <property type="match status" value="1"/>
</dbReference>
<dbReference type="Pfam" id="PF00218">
    <property type="entry name" value="IGPS"/>
    <property type="match status" value="1"/>
</dbReference>
<dbReference type="Pfam" id="PF00697">
    <property type="entry name" value="PRAI"/>
    <property type="match status" value="1"/>
</dbReference>
<dbReference type="SUPFAM" id="SSF51366">
    <property type="entry name" value="Ribulose-phoshate binding barrel"/>
    <property type="match status" value="2"/>
</dbReference>
<dbReference type="PROSITE" id="PS00614">
    <property type="entry name" value="IGPS"/>
    <property type="match status" value="1"/>
</dbReference>
<feature type="chain" id="PRO_0000154284" description="Tryptophan biosynthesis protein TrpCF">
    <location>
        <begin position="1"/>
        <end position="452"/>
    </location>
</feature>
<feature type="region of interest" description="Indole-3-glycerol phosphate synthase">
    <location>
        <begin position="1"/>
        <end position="256"/>
    </location>
</feature>
<feature type="region of interest" description="N-(5'-phosphoribosyl)anthranilate isomerase">
    <location>
        <begin position="257"/>
        <end position="452"/>
    </location>
</feature>
<protein>
    <recommendedName>
        <fullName>Tryptophan biosynthesis protein TrpCF</fullName>
    </recommendedName>
    <domain>
        <recommendedName>
            <fullName>Indole-3-glycerol phosphate synthase</fullName>
            <shortName>IGPS</shortName>
            <ecNumber>4.1.1.48</ecNumber>
        </recommendedName>
    </domain>
    <domain>
        <recommendedName>
            <fullName>N-(5'-phospho-ribosyl)anthranilate isomerase</fullName>
            <shortName>PRAI</shortName>
            <ecNumber>5.3.1.24</ecNumber>
        </recommendedName>
    </domain>
</protein>
<proteinExistence type="inferred from homology"/>
<accession>P00910</accession>
<evidence type="ECO:0000250" key="1"/>
<evidence type="ECO:0000305" key="2"/>
<sequence>MQTVLAKIVADKAIWVEARKQQQPLASFQNEIQPSTRHFYDALQGARTAFILECKKASPSKGVIRDDFDPARIASIYQHYASAISVLTDEKYFQGSFDFLPVVSQSAPQPILCKDFIIDPYQIYLARYYQADACLLMLSVLDDEQYRQLSAVAHSLKMGVLTEVSNDEERERAIALGAKVVGINNRDLRDLSIDLNRTRQLAPKLGHGVTVISESGINTYGQVRELSHFANGFLIGSALMAHDDLNAAVRRVLLGENKVCGLTRAQDAKAACDAGAIYGGLIFVPSSPRAVSVEQAREVISGAPLQYVGVFKNADIADVCQKAAVLSLSAVQLHGSEDQAYVNALREALPKQVQIWKALSVSDALPARDYHHVDKYIFDNGQGGSGQRFDWSLLQGQPLDNVLLAGGLAADNCVQAAQVGCAGLDFNSGVESQPGIKDARLLASVFQTLRAY</sequence>
<reference key="1">
    <citation type="journal article" date="1983" name="J. Mol. Biol.">
        <title>Nucleotide sequence of the trpD and trpC genes of Salmonella typhimurium.</title>
        <authorList>
            <person name="Horowitz H."/>
            <person name="van Arsdell J."/>
            <person name="Platt T."/>
        </authorList>
    </citation>
    <scope>NUCLEOTIDE SEQUENCE [GENOMIC DNA]</scope>
</reference>
<reference key="2">
    <citation type="journal article" date="2001" name="Nature">
        <title>Complete genome sequence of Salmonella enterica serovar Typhimurium LT2.</title>
        <authorList>
            <person name="McClelland M."/>
            <person name="Sanderson K.E."/>
            <person name="Spieth J."/>
            <person name="Clifton S.W."/>
            <person name="Latreille P."/>
            <person name="Courtney L."/>
            <person name="Porwollik S."/>
            <person name="Ali J."/>
            <person name="Dante M."/>
            <person name="Du F."/>
            <person name="Hou S."/>
            <person name="Layman D."/>
            <person name="Leonard S."/>
            <person name="Nguyen C."/>
            <person name="Scott K."/>
            <person name="Holmes A."/>
            <person name="Grewal N."/>
            <person name="Mulvaney E."/>
            <person name="Ryan E."/>
            <person name="Sun H."/>
            <person name="Florea L."/>
            <person name="Miller W."/>
            <person name="Stoneking T."/>
            <person name="Nhan M."/>
            <person name="Waterston R."/>
            <person name="Wilson R.K."/>
        </authorList>
    </citation>
    <scope>NUCLEOTIDE SEQUENCE [LARGE SCALE GENOMIC DNA]</scope>
    <source>
        <strain>LT2 / SGSC1412 / ATCC 700720</strain>
    </source>
</reference>
<organism>
    <name type="scientific">Salmonella typhimurium (strain LT2 / SGSC1412 / ATCC 700720)</name>
    <dbReference type="NCBI Taxonomy" id="99287"/>
    <lineage>
        <taxon>Bacteria</taxon>
        <taxon>Pseudomonadati</taxon>
        <taxon>Pseudomonadota</taxon>
        <taxon>Gammaproteobacteria</taxon>
        <taxon>Enterobacterales</taxon>
        <taxon>Enterobacteriaceae</taxon>
        <taxon>Salmonella</taxon>
    </lineage>
</organism>